<proteinExistence type="evidence at protein level"/>
<organism>
    <name type="scientific">Penicillium decumbens</name>
    <dbReference type="NCBI Taxonomy" id="69771"/>
    <lineage>
        <taxon>Eukaryota</taxon>
        <taxon>Fungi</taxon>
        <taxon>Dikarya</taxon>
        <taxon>Ascomycota</taxon>
        <taxon>Pezizomycotina</taxon>
        <taxon>Eurotiomycetes</taxon>
        <taxon>Eurotiomycetidae</taxon>
        <taxon>Eurotiales</taxon>
        <taxon>Aspergillaceae</taxon>
        <taxon>Penicillium</taxon>
    </lineage>
</organism>
<accession>P0CU82</accession>
<reference key="1">
    <citation type="journal article" date="2017" name="Nat. Microbiol.">
        <title>Global analysis of biosynthetic gene clusters reveals vast potential of secondary metabolite production in Penicillium species.</title>
        <authorList>
            <person name="Nielsen J.C."/>
            <person name="Grijseels S."/>
            <person name="Prigent S."/>
            <person name="Ji B."/>
            <person name="Dainat J."/>
            <person name="Nielsen K.F."/>
            <person name="Frisvad J.C."/>
            <person name="Workman M."/>
            <person name="Nielsen J."/>
        </authorList>
    </citation>
    <scope>NUCLEOTIDE SEQUENCE [LARGE SCALE GENOMIC DNA]</scope>
    <source>
        <strain>IBT 11843</strain>
    </source>
</reference>
<reference key="2">
    <citation type="journal article" date="1993" name="J. Antibiot.">
        <title>Calbistrins, novel antifungal agents produced by Penicillium restrictum. I. Production, taxonomy of the producing organism and biological activity.</title>
        <authorList>
            <person name="Jackson M."/>
            <person name="Karwowski J.P."/>
            <person name="Humphrey P.E."/>
            <person name="Kohl W.L."/>
            <person name="Barlow G.J."/>
            <person name="Tanaka S.K."/>
        </authorList>
    </citation>
    <scope>BIOTECHNOLOGY</scope>
</reference>
<reference key="3">
    <citation type="journal article" date="2013" name="Molecules">
        <title>Bio-activity and dereplication-based discovery of ophiobolins and other fungal secondary metabolites targeting leukemia cells.</title>
        <authorList>
            <person name="Bladt T.T."/>
            <person name="Duerr C."/>
            <person name="Knudsen P.B."/>
            <person name="Kildgaard S."/>
            <person name="Frisvad J.C."/>
            <person name="Gotfredsen C.H."/>
            <person name="Seiffert M."/>
            <person name="Larsen T.O."/>
        </authorList>
    </citation>
    <scope>BIOTECHNOLOGY</scope>
</reference>
<reference key="4">
    <citation type="journal article" date="2018" name="Fungal Biol. Biotechnol.">
        <title>Identification of the decumbenone biosynthetic gene cluster in Penicillium decumbens and the importance for production of calbistrin.</title>
        <authorList>
            <person name="Grijseels S."/>
            <person name="Pohl C."/>
            <person name="Nielsen J.C."/>
            <person name="Wasil Z."/>
            <person name="Nygaard Y."/>
            <person name="Nielsen J."/>
            <person name="Frisvad J.C."/>
            <person name="Nielsen K.F."/>
            <person name="Workman M."/>
            <person name="Larsen T.O."/>
            <person name="Driessen A.J.M."/>
            <person name="Frandsen R.J.N."/>
        </authorList>
    </citation>
    <scope>IDENTIFICATION</scope>
    <scope>FUNCTION</scope>
    <scope>INDUCTION</scope>
    <scope>PATHWAY</scope>
</reference>
<name>CALM_PENDC</name>
<protein>
    <recommendedName>
        <fullName evidence="7">Oxidoreductase calM</fullName>
        <ecNumber evidence="9">1.-.-.-</ecNumber>
    </recommendedName>
    <alternativeName>
        <fullName evidence="7">Calbistrin biosynthesis cluster protein N</fullName>
    </alternativeName>
</protein>
<comment type="function">
    <text evidence="5 9">Oxidoreductase; part of the gene cluster that mediates the biosynthesis of calbistrin A and related compounds. Calbistrin A is a secondary metabolite with an interesting structure that was recently found to have bioactivity against leukemia cells. It consists of two polyketides linked by an ester bond: a bicyclic decalin containing polyketide and a linear 12 carbon dioic acid structure (PubMed:30598828). The polyketide synthase calA is probably responsible for forming the decalin moiety. Because calA lacks a designated enoylreductase (ER) domain, the required activity is provided by the trans-enoyl reductase calK (PubMed:30598828). Following release from the PKS, calF then probably catalyzes the oxidation and the subsequent Diels Alder cycloisomerization that lead to the formation of the decalin moiety (Probable). The decalin polyketide backbone includes two C-methyl groups, at C7 and C11 in backbone, of which the C7 position is probably methylated by the methyltransferase domain of calA. A candidate for adding the methyl group at C11, if not done by CalA, is the cluster methyltransferase calH (Probable). Several additional tailoring enzymes within the cluster could be involved in the modification of the decalin polyketide product. Those include the 3 cytochrome P450 monooxygenases CalE, CalG and CalL, of which one might be responsible for the introduction of the extra hydroxyl group attached to the backbone of the decalin moiety, at position C9 in the backbone, that allows for attachment of the linear moiety (Probable). One tailoring enzyme activity that is expected to be involved in biosynthesis of calbistrin is an acyltransferase for connecting the two polyketide synthase products, and which could be performed by the cluster acyltransferase calJ (Probable). The enzyme responsible for the biosynthesis of the linear moiety, probably a second PKS, has not been identified yet (Probable).</text>
</comment>
<comment type="pathway">
    <text evidence="9">Secondary metabolite biosynthesis.</text>
</comment>
<comment type="induction">
    <text evidence="5">Expression is induced in complex medium (Czapek yeast autolysate medium) supporting calbistrin production.</text>
</comment>
<comment type="biotechnology">
    <text evidence="4 6">Calbistrin A has been reported to possess a number of interesting bioactivities including antifungal active against Candida albicans and cytotoxic toward both healthy and leukemic human cells.</text>
</comment>
<comment type="similarity">
    <text evidence="8">Belongs to the short-chain dehydrogenases/reductases (SDR) family.</text>
</comment>
<dbReference type="EC" id="1.-.-.-" evidence="9"/>
<dbReference type="EMBL" id="MDYL01000013">
    <property type="status" value="NOT_ANNOTATED_CDS"/>
    <property type="molecule type" value="Genomic_DNA"/>
</dbReference>
<dbReference type="SMR" id="P0CU82"/>
<dbReference type="STRING" id="69771.P0CU82"/>
<dbReference type="Proteomes" id="UP000191522">
    <property type="component" value="Unassembled WGS sequence"/>
</dbReference>
<dbReference type="GO" id="GO:0016491">
    <property type="term" value="F:oxidoreductase activity"/>
    <property type="evidence" value="ECO:0007669"/>
    <property type="project" value="UniProtKB-KW"/>
</dbReference>
<dbReference type="CDD" id="cd05374">
    <property type="entry name" value="17beta-HSD-like_SDR_c"/>
    <property type="match status" value="1"/>
</dbReference>
<dbReference type="Gene3D" id="3.40.50.720">
    <property type="entry name" value="NAD(P)-binding Rossmann-like Domain"/>
    <property type="match status" value="1"/>
</dbReference>
<dbReference type="InterPro" id="IPR036291">
    <property type="entry name" value="NAD(P)-bd_dom_sf"/>
</dbReference>
<dbReference type="InterPro" id="IPR002347">
    <property type="entry name" value="SDR_fam"/>
</dbReference>
<dbReference type="InterPro" id="IPR051911">
    <property type="entry name" value="SDR_oxidoreductase"/>
</dbReference>
<dbReference type="PANTHER" id="PTHR43976">
    <property type="entry name" value="SHORT CHAIN DEHYDROGENASE"/>
    <property type="match status" value="1"/>
</dbReference>
<dbReference type="PANTHER" id="PTHR43976:SF16">
    <property type="entry name" value="SHORT-CHAIN DEHYDROGENASE_REDUCTASE FAMILY PROTEIN"/>
    <property type="match status" value="1"/>
</dbReference>
<dbReference type="Pfam" id="PF00106">
    <property type="entry name" value="adh_short"/>
    <property type="match status" value="1"/>
</dbReference>
<dbReference type="PRINTS" id="PR00081">
    <property type="entry name" value="GDHRDH"/>
</dbReference>
<dbReference type="PRINTS" id="PR00080">
    <property type="entry name" value="SDRFAMILY"/>
</dbReference>
<dbReference type="SMART" id="SM00822">
    <property type="entry name" value="PKS_KR"/>
    <property type="match status" value="1"/>
</dbReference>
<dbReference type="SUPFAM" id="SSF51735">
    <property type="entry name" value="NAD(P)-binding Rossmann-fold domains"/>
    <property type="match status" value="1"/>
</dbReference>
<evidence type="ECO:0000250" key="1">
    <source>
        <dbReference type="UniProtKB" id="L0E2Z4"/>
    </source>
</evidence>
<evidence type="ECO:0000250" key="2">
    <source>
        <dbReference type="UniProtKB" id="O93868"/>
    </source>
</evidence>
<evidence type="ECO:0000255" key="3">
    <source>
        <dbReference type="PROSITE-ProRule" id="PRU10001"/>
    </source>
</evidence>
<evidence type="ECO:0000269" key="4">
    <source>
    </source>
</evidence>
<evidence type="ECO:0000269" key="5">
    <source>
    </source>
</evidence>
<evidence type="ECO:0000269" key="6">
    <source>
    </source>
</evidence>
<evidence type="ECO:0000303" key="7">
    <source>
    </source>
</evidence>
<evidence type="ECO:0000305" key="8"/>
<evidence type="ECO:0000305" key="9">
    <source>
    </source>
</evidence>
<feature type="chain" id="PRO_0000446480" description="Oxidoreductase calM">
    <location>
        <begin position="1"/>
        <end position="304"/>
    </location>
</feature>
<feature type="active site" description="Proton donor" evidence="2">
    <location>
        <position position="152"/>
    </location>
</feature>
<feature type="active site" description="Proton acceptor" evidence="3">
    <location>
        <position position="166"/>
    </location>
</feature>
<feature type="active site" description="Lowers pKa of active site Tyr" evidence="2">
    <location>
        <position position="170"/>
    </location>
</feature>
<feature type="binding site" evidence="1">
    <location>
        <position position="26"/>
    </location>
    <ligand>
        <name>NADP(+)</name>
        <dbReference type="ChEBI" id="CHEBI:58349"/>
    </ligand>
</feature>
<feature type="binding site" evidence="1">
    <location>
        <position position="45"/>
    </location>
    <ligand>
        <name>NADP(+)</name>
        <dbReference type="ChEBI" id="CHEBI:58349"/>
    </ligand>
</feature>
<feature type="binding site" evidence="1">
    <location>
        <position position="68"/>
    </location>
    <ligand>
        <name>NADP(+)</name>
        <dbReference type="ChEBI" id="CHEBI:58349"/>
    </ligand>
</feature>
<feature type="binding site" evidence="2">
    <location>
        <position position="98"/>
    </location>
    <ligand>
        <name>NADP(+)</name>
        <dbReference type="ChEBI" id="CHEBI:58349"/>
    </ligand>
</feature>
<feature type="binding site" evidence="2">
    <location>
        <position position="166"/>
    </location>
    <ligand>
        <name>NADP(+)</name>
        <dbReference type="ChEBI" id="CHEBI:58349"/>
    </ligand>
</feature>
<feature type="binding site" evidence="2">
    <location>
        <position position="170"/>
    </location>
    <ligand>
        <name>NADP(+)</name>
        <dbReference type="ChEBI" id="CHEBI:58349"/>
    </ligand>
</feature>
<feature type="binding site" evidence="2">
    <location>
        <position position="200"/>
    </location>
    <ligand>
        <name>NADP(+)</name>
        <dbReference type="ChEBI" id="CHEBI:58349"/>
    </ligand>
</feature>
<feature type="binding site" evidence="1">
    <location>
        <position position="202"/>
    </location>
    <ligand>
        <name>NADP(+)</name>
        <dbReference type="ChEBI" id="CHEBI:58349"/>
    </ligand>
</feature>
<gene>
    <name evidence="7" type="primary">calM</name>
</gene>
<sequence length="304" mass="33224">MNPVNTKPYQLSADATWFVTGCSTGIGRAIASHVASQPGHRLIATARDPSSLSYLDDDNPAILKLAMDVTNPSSVNAAFKAAADYFGDKYYIDVVVNNAGYSLSGDTESVTEHEMHDEFETNFFGTVRVTLKAIEVMRQSKDHRGGLIFNISSLAGICAFPGHAFYHASKFAVEGWSESVAREMHPDWNIHFCIVEPSAVKTNFETTSKKRTQPHEAYAGADMPARQLETFVKKGLEAGVGFEPSAVANVLYKVASRNEKVPLRLPLSATAVKLITAKLQVQLQDLETVSELSAIDVHQVQFKV</sequence>
<keyword id="KW-0521">NADP</keyword>
<keyword id="KW-0560">Oxidoreductase</keyword>
<keyword id="KW-1185">Reference proteome</keyword>